<reference key="1">
    <citation type="online journal article" date="1996" name="Plant Gene Register">
        <title>Sequences of seven cDNAs encoding the Rubisco small subunit from Flaveria pringlei.</title>
        <authorList>
            <person name="McGonigle B."/>
            <person name="Lai L.B."/>
            <person name="Nelson T."/>
        </authorList>
        <locator>PGR96-057</locator>
    </citation>
    <scope>NUCLEOTIDE SEQUENCE [MRNA]</scope>
    <source>
        <tissue>Leaf</tissue>
    </source>
</reference>
<organism>
    <name type="scientific">Flaveria pringlei</name>
    <dbReference type="NCBI Taxonomy" id="4226"/>
    <lineage>
        <taxon>Eukaryota</taxon>
        <taxon>Viridiplantae</taxon>
        <taxon>Streptophyta</taxon>
        <taxon>Embryophyta</taxon>
        <taxon>Tracheophyta</taxon>
        <taxon>Spermatophyta</taxon>
        <taxon>Magnoliopsida</taxon>
        <taxon>eudicotyledons</taxon>
        <taxon>Gunneridae</taxon>
        <taxon>Pentapetalae</taxon>
        <taxon>asterids</taxon>
        <taxon>campanulids</taxon>
        <taxon>Asterales</taxon>
        <taxon>Asteraceae</taxon>
        <taxon>Asteroideae</taxon>
        <taxon>Heliantheae alliance</taxon>
        <taxon>Tageteae</taxon>
        <taxon>Flaveria</taxon>
    </lineage>
</organism>
<protein>
    <recommendedName>
        <fullName evidence="1">Ribulose bisphosphate carboxylase small subunit, chloroplastic 7</fullName>
        <shortName evidence="1">RuBisCO small subunit 7</shortName>
    </recommendedName>
</protein>
<dbReference type="EMBL" id="U29939">
    <property type="protein sequence ID" value="AAB67851.1"/>
    <property type="molecule type" value="mRNA"/>
</dbReference>
<dbReference type="SMR" id="Q39749"/>
<dbReference type="GO" id="GO:0009507">
    <property type="term" value="C:chloroplast"/>
    <property type="evidence" value="ECO:0007669"/>
    <property type="project" value="UniProtKB-SubCell"/>
</dbReference>
<dbReference type="GO" id="GO:0016984">
    <property type="term" value="F:ribulose-bisphosphate carboxylase activity"/>
    <property type="evidence" value="ECO:0007669"/>
    <property type="project" value="UniProtKB-UniRule"/>
</dbReference>
<dbReference type="GO" id="GO:0009853">
    <property type="term" value="P:photorespiration"/>
    <property type="evidence" value="ECO:0007669"/>
    <property type="project" value="UniProtKB-KW"/>
</dbReference>
<dbReference type="GO" id="GO:0019253">
    <property type="term" value="P:reductive pentose-phosphate cycle"/>
    <property type="evidence" value="ECO:0007669"/>
    <property type="project" value="UniProtKB-UniRule"/>
</dbReference>
<dbReference type="CDD" id="cd03527">
    <property type="entry name" value="RuBisCO_small"/>
    <property type="match status" value="1"/>
</dbReference>
<dbReference type="FunFam" id="3.30.190.10:FF:000001">
    <property type="entry name" value="Ribulose bisphosphate carboxylase small chain, chloroplastic"/>
    <property type="match status" value="1"/>
</dbReference>
<dbReference type="Gene3D" id="3.30.190.10">
    <property type="entry name" value="Ribulose bisphosphate carboxylase, small subunit"/>
    <property type="match status" value="1"/>
</dbReference>
<dbReference type="HAMAP" id="MF_00859">
    <property type="entry name" value="RuBisCO_S_bact"/>
    <property type="match status" value="1"/>
</dbReference>
<dbReference type="InterPro" id="IPR024681">
    <property type="entry name" value="RuBisCO_ssu"/>
</dbReference>
<dbReference type="InterPro" id="IPR000894">
    <property type="entry name" value="RuBisCO_ssu_dom"/>
</dbReference>
<dbReference type="InterPro" id="IPR024680">
    <property type="entry name" value="RuBisCO_ssu_N"/>
</dbReference>
<dbReference type="InterPro" id="IPR036385">
    <property type="entry name" value="RuBisCO_ssu_sf"/>
</dbReference>
<dbReference type="PANTHER" id="PTHR31262">
    <property type="entry name" value="RIBULOSE BISPHOSPHATE CARBOXYLASE SMALL CHAIN 1, CHLOROPLASTIC"/>
    <property type="match status" value="1"/>
</dbReference>
<dbReference type="PANTHER" id="PTHR31262:SF10">
    <property type="entry name" value="RIBULOSE BISPHOSPHATE CARBOXYLASE SMALL SUBUNIT 1A, CHLOROPLASTIC-RELATED"/>
    <property type="match status" value="1"/>
</dbReference>
<dbReference type="Pfam" id="PF12338">
    <property type="entry name" value="RbcS"/>
    <property type="match status" value="1"/>
</dbReference>
<dbReference type="Pfam" id="PF00101">
    <property type="entry name" value="RuBisCO_small"/>
    <property type="match status" value="1"/>
</dbReference>
<dbReference type="PRINTS" id="PR00152">
    <property type="entry name" value="RUBISCOSMALL"/>
</dbReference>
<dbReference type="SMART" id="SM00961">
    <property type="entry name" value="RuBisCO_small"/>
    <property type="match status" value="1"/>
</dbReference>
<dbReference type="SUPFAM" id="SSF55239">
    <property type="entry name" value="RuBisCO, small subunit"/>
    <property type="match status" value="1"/>
</dbReference>
<sequence>MASIPATVATVAQANMVAPFTGLKSNAAFPVTKKVNDFSTLASNGGRVQCMKVWPPLGKKRYETLSYLPNLTEVQLAKEVDYLLRNKWVPCLEFELEHGFVYRENARSPGYYDGRYWTMWKLPMFGCTDSAQVMKELQECKKEYPQAWIRIIGFDNVRQVQCISFIASKPDGF</sequence>
<evidence type="ECO:0000255" key="1">
    <source>
        <dbReference type="HAMAP-Rule" id="MF_00860"/>
    </source>
</evidence>
<comment type="function">
    <text evidence="1">RuBisCO catalyzes two reactions: the carboxylation of D-ribulose 1,5-bisphosphate, the primary event in carbon dioxide fixation, as well as the oxidative fragmentation of the pentose substrate. Both reactions occur simultaneously and in competition at the same active site. Although the small subunit is not catalytic it is essential for maximal activity.</text>
</comment>
<comment type="subunit">
    <text evidence="1">Heterohexadecamer of 8 large and 8 small subunits.</text>
</comment>
<comment type="subcellular location">
    <subcellularLocation>
        <location evidence="1">Plastid</location>
        <location evidence="1">Chloroplast</location>
    </subcellularLocation>
</comment>
<comment type="miscellaneous">
    <text evidence="1">The basic functional RuBisCO is composed of a large chain homodimer in a 'head-to-tail' conformation. In form I RuBisCO this homodimer is arranged in a barrel-like tetramer with the small subunits forming a tetrameric 'cap' on each end of the 'barrel'.</text>
</comment>
<comment type="similarity">
    <text evidence="1">Belongs to the RuBisCO small chain family.</text>
</comment>
<keyword id="KW-0113">Calvin cycle</keyword>
<keyword id="KW-0120">Carbon dioxide fixation</keyword>
<keyword id="KW-0150">Chloroplast</keyword>
<keyword id="KW-0601">Photorespiration</keyword>
<keyword id="KW-0602">Photosynthesis</keyword>
<keyword id="KW-0934">Plastid</keyword>
<keyword id="KW-0809">Transit peptide</keyword>
<proteinExistence type="evidence at transcript level"/>
<name>RBS7_FLAPR</name>
<feature type="transit peptide" description="Chloroplast" evidence="1">
    <location>
        <begin position="1"/>
        <end position="49"/>
    </location>
</feature>
<feature type="chain" id="PRO_0000031498" description="Ribulose bisphosphate carboxylase small subunit, chloroplastic 7" evidence="1">
    <location>
        <begin position="50"/>
        <end position="173"/>
    </location>
</feature>
<accession>Q39749</accession>
<gene>
    <name evidence="1" type="primary">RBCS7</name>
</gene>